<organism>
    <name type="scientific">Chaetosphaeridium globosum</name>
    <name type="common">Charophycean green alga</name>
    <name type="synonym">Herposteiron globosum</name>
    <dbReference type="NCBI Taxonomy" id="96477"/>
    <lineage>
        <taxon>Eukaryota</taxon>
        <taxon>Viridiplantae</taxon>
        <taxon>Streptophyta</taxon>
        <taxon>Coleochaetophyceae</taxon>
        <taxon>Coleochaetales</taxon>
        <taxon>Chaetosphaeridiaceae</taxon>
        <taxon>Chaetosphaeridium</taxon>
    </lineage>
</organism>
<gene>
    <name evidence="1" type="primary">chlN-1</name>
</gene>
<gene>
    <name evidence="1" type="primary">chlN-2</name>
</gene>
<geneLocation type="chloroplast"/>
<feature type="chain" id="PRO_0000208608" description="Light-independent protochlorophyllide reductase subunit N">
    <location>
        <begin position="1"/>
        <end position="458"/>
    </location>
</feature>
<feature type="binding site" evidence="1">
    <location>
        <position position="22"/>
    </location>
    <ligand>
        <name>[4Fe-4S] cluster</name>
        <dbReference type="ChEBI" id="CHEBI:49883"/>
        <note>ligand shared with heterodimeric partner</note>
    </ligand>
</feature>
<feature type="binding site" evidence="1">
    <location>
        <position position="47"/>
    </location>
    <ligand>
        <name>[4Fe-4S] cluster</name>
        <dbReference type="ChEBI" id="CHEBI:49883"/>
        <note>ligand shared with heterodimeric partner</note>
    </ligand>
</feature>
<feature type="binding site" evidence="1">
    <location>
        <position position="107"/>
    </location>
    <ligand>
        <name>[4Fe-4S] cluster</name>
        <dbReference type="ChEBI" id="CHEBI:49883"/>
        <note>ligand shared with heterodimeric partner</note>
    </ligand>
</feature>
<protein>
    <recommendedName>
        <fullName evidence="1">Light-independent protochlorophyllide reductase subunit N</fullName>
        <shortName evidence="1">DPOR subunit N</shortName>
        <shortName evidence="1">LI-POR subunit N</shortName>
        <ecNumber evidence="1">1.3.7.7</ecNumber>
    </recommendedName>
</protein>
<dbReference type="EC" id="1.3.7.7" evidence="1"/>
<dbReference type="EMBL" id="AF494278">
    <property type="protein sequence ID" value="AAM96510.1"/>
    <property type="molecule type" value="Genomic_DNA"/>
</dbReference>
<dbReference type="EMBL" id="AF494278">
    <property type="protein sequence ID" value="AAM96590.1"/>
    <property type="molecule type" value="Genomic_DNA"/>
</dbReference>
<dbReference type="SMR" id="Q8LW53"/>
<dbReference type="UniPathway" id="UPA00670"/>
<dbReference type="GO" id="GO:0009507">
    <property type="term" value="C:chloroplast"/>
    <property type="evidence" value="ECO:0007669"/>
    <property type="project" value="UniProtKB-SubCell"/>
</dbReference>
<dbReference type="GO" id="GO:0051539">
    <property type="term" value="F:4 iron, 4 sulfur cluster binding"/>
    <property type="evidence" value="ECO:0007669"/>
    <property type="project" value="UniProtKB-UniRule"/>
</dbReference>
<dbReference type="GO" id="GO:0005524">
    <property type="term" value="F:ATP binding"/>
    <property type="evidence" value="ECO:0007669"/>
    <property type="project" value="UniProtKB-UniRule"/>
</dbReference>
<dbReference type="GO" id="GO:0046872">
    <property type="term" value="F:metal ion binding"/>
    <property type="evidence" value="ECO:0007669"/>
    <property type="project" value="UniProtKB-KW"/>
</dbReference>
<dbReference type="GO" id="GO:0016730">
    <property type="term" value="F:oxidoreductase activity, acting on iron-sulfur proteins as donors"/>
    <property type="evidence" value="ECO:0007669"/>
    <property type="project" value="InterPro"/>
</dbReference>
<dbReference type="GO" id="GO:0016636">
    <property type="term" value="F:oxidoreductase activity, acting on the CH-CH group of donors, iron-sulfur protein as acceptor"/>
    <property type="evidence" value="ECO:0007669"/>
    <property type="project" value="UniProtKB-UniRule"/>
</dbReference>
<dbReference type="GO" id="GO:0036068">
    <property type="term" value="P:light-independent chlorophyll biosynthetic process"/>
    <property type="evidence" value="ECO:0007669"/>
    <property type="project" value="UniProtKB-UniRule"/>
</dbReference>
<dbReference type="GO" id="GO:0019685">
    <property type="term" value="P:photosynthesis, dark reaction"/>
    <property type="evidence" value="ECO:0007669"/>
    <property type="project" value="InterPro"/>
</dbReference>
<dbReference type="CDD" id="cd01979">
    <property type="entry name" value="Pchlide_reductase_N"/>
    <property type="match status" value="1"/>
</dbReference>
<dbReference type="Gene3D" id="3.40.50.1980">
    <property type="entry name" value="Nitrogenase molybdenum iron protein domain"/>
    <property type="match status" value="3"/>
</dbReference>
<dbReference type="HAMAP" id="MF_00352">
    <property type="entry name" value="ChlN_BchN"/>
    <property type="match status" value="1"/>
</dbReference>
<dbReference type="InterPro" id="IPR050293">
    <property type="entry name" value="LIPOR_BchN/ChlN"/>
</dbReference>
<dbReference type="InterPro" id="IPR000510">
    <property type="entry name" value="Nase/OxRdtase_comp1"/>
</dbReference>
<dbReference type="InterPro" id="IPR005970">
    <property type="entry name" value="Protochl_reductN"/>
</dbReference>
<dbReference type="NCBIfam" id="TIGR01279">
    <property type="entry name" value="DPOR_bchN"/>
    <property type="match status" value="1"/>
</dbReference>
<dbReference type="NCBIfam" id="NF002768">
    <property type="entry name" value="PRK02842.1"/>
    <property type="match status" value="1"/>
</dbReference>
<dbReference type="PANTHER" id="PTHR39429">
    <property type="entry name" value="LIGHT-INDEPENDENT PROTOCHLOROPHYLLIDE REDUCTASE SUBUNIT N"/>
    <property type="match status" value="1"/>
</dbReference>
<dbReference type="PANTHER" id="PTHR39429:SF3">
    <property type="entry name" value="LIGHT-INDEPENDENT PROTOCHLOROPHYLLIDE REDUCTASE SUBUNIT N"/>
    <property type="match status" value="1"/>
</dbReference>
<dbReference type="Pfam" id="PF00148">
    <property type="entry name" value="Oxidored_nitro"/>
    <property type="match status" value="1"/>
</dbReference>
<dbReference type="PIRSF" id="PIRSF000162">
    <property type="entry name" value="P_chlorophyll_rd"/>
    <property type="match status" value="1"/>
</dbReference>
<dbReference type="SUPFAM" id="SSF53807">
    <property type="entry name" value="Helical backbone' metal receptor"/>
    <property type="match status" value="1"/>
</dbReference>
<proteinExistence type="inferred from homology"/>
<sequence>MNSAISDTLTFECETGNYHTFCPISCVAWLYQKIEDSFFLVVGTKTCGYFLQNALGVMIFAEPRYAMAELEEGDISAQLNDYQELKNICLQIKKDRNPSVIVWIGTCTTEIIKMDLEGMAPRLEAEIGIPIVVARANGLDYAFTQGEDTVLAAMAQRCPEISVASKQNQPMGSAFSQTLKVSNQQDHPPLVLFGSLPSTVASQLDLELKRQSIEVSGWLPSQRYTDLPLLGEGVHVCGVNPFLSRTATTLMRRRKCKLISAPFPIGPDGTRAWIEKICSVFGIQPQGLEERENQIWDGLKDYIDLVRGKSVFFMGDNLLEVSLARFLIRCGMVVYEIGIPYMDKRYQAAELALLQKTCQDMNVPMPRIVEKPDNYNQVQRMRELQPDLAITGMAHANPLEARGISTKWSVEFTFAQIHGFTNARDILELVTRPLRRNHSLQGLGWSSLVKEQNQLIPS</sequence>
<keyword id="KW-0004">4Fe-4S</keyword>
<keyword id="KW-0067">ATP-binding</keyword>
<keyword id="KW-0149">Chlorophyll biosynthesis</keyword>
<keyword id="KW-0150">Chloroplast</keyword>
<keyword id="KW-0408">Iron</keyword>
<keyword id="KW-0411">Iron-sulfur</keyword>
<keyword id="KW-0479">Metal-binding</keyword>
<keyword id="KW-0547">Nucleotide-binding</keyword>
<keyword id="KW-0560">Oxidoreductase</keyword>
<keyword id="KW-0602">Photosynthesis</keyword>
<keyword id="KW-0934">Plastid</keyword>
<comment type="function">
    <text evidence="1">Component of the dark-operative protochlorophyllide reductase (DPOR) that uses Mg-ATP and reduced ferredoxin to reduce ring D of protochlorophyllide (Pchlide) to form chlorophyllide a (Chlide). This reaction is light-independent. The NB-protein (ChlN-ChlB) is the catalytic component of the complex.</text>
</comment>
<comment type="catalytic activity">
    <reaction evidence="1">
        <text>chlorophyllide a + oxidized 2[4Fe-4S]-[ferredoxin] + 2 ADP + 2 phosphate = protochlorophyllide a + reduced 2[4Fe-4S]-[ferredoxin] + 2 ATP + 2 H2O</text>
        <dbReference type="Rhea" id="RHEA:28202"/>
        <dbReference type="Rhea" id="RHEA-COMP:10002"/>
        <dbReference type="Rhea" id="RHEA-COMP:10004"/>
        <dbReference type="ChEBI" id="CHEBI:15377"/>
        <dbReference type="ChEBI" id="CHEBI:30616"/>
        <dbReference type="ChEBI" id="CHEBI:33722"/>
        <dbReference type="ChEBI" id="CHEBI:33723"/>
        <dbReference type="ChEBI" id="CHEBI:43474"/>
        <dbReference type="ChEBI" id="CHEBI:83348"/>
        <dbReference type="ChEBI" id="CHEBI:83350"/>
        <dbReference type="ChEBI" id="CHEBI:456216"/>
        <dbReference type="EC" id="1.3.7.7"/>
    </reaction>
</comment>
<comment type="cofactor">
    <cofactor evidence="1">
        <name>[4Fe-4S] cluster</name>
        <dbReference type="ChEBI" id="CHEBI:49883"/>
    </cofactor>
    <text evidence="1">Binds 1 [4Fe-4S] cluster per heterodimer. The cluster is bound at the heterodimer interface by residues from both subunits.</text>
</comment>
<comment type="pathway">
    <text evidence="1">Porphyrin-containing compound metabolism; chlorophyll biosynthesis (light-independent).</text>
</comment>
<comment type="subunit">
    <text evidence="1">Protochlorophyllide reductase is composed of three subunits; ChlL, ChlN and ChlB. Forms a heterotetramer of two ChlB and two ChlN subunits.</text>
</comment>
<comment type="subcellular location">
    <subcellularLocation>
        <location>Plastid</location>
        <location>Chloroplast</location>
    </subcellularLocation>
</comment>
<comment type="similarity">
    <text evidence="1">Belongs to the BchN/ChlN family.</text>
</comment>
<reference key="1">
    <citation type="journal article" date="2002" name="Proc. Natl. Acad. Sci. U.S.A.">
        <title>The chloroplast and mitochondrial genome sequences of the charophyte Chaetosphaeridium globosum: insights into the timing of the events that restructured organelle DNAs within the green algal lineage that led to land plants.</title>
        <authorList>
            <person name="Turmel M."/>
            <person name="Otis C."/>
            <person name="Lemieux C."/>
        </authorList>
    </citation>
    <scope>NUCLEOTIDE SEQUENCE [LARGE SCALE GENOMIC DNA]</scope>
    <source>
        <strain>M1311</strain>
    </source>
</reference>
<accession>Q8LW53</accession>
<evidence type="ECO:0000255" key="1">
    <source>
        <dbReference type="HAMAP-Rule" id="MF_00352"/>
    </source>
</evidence>
<name>CHLN_CHAGL</name>